<name>SP23_IXOSC</name>
<comment type="function">
    <text evidence="3">Inhibits host coagulation by delaying thrombin generation and reducing endogenous thrombin potential (ETP).</text>
</comment>
<comment type="subcellular location">
    <subcellularLocation>
        <location evidence="5">Secreted</location>
    </subcellularLocation>
</comment>
<comment type="tissue specificity">
    <text evidence="3">Salivary gland (at protein level) (PubMed:21246036). Adult midgut (PubMed:21246036).</text>
</comment>
<comment type="developmental stage">
    <text evidence="3">Expressed in larval, nymphal and adult ticks.</text>
</comment>
<comment type="induction">
    <text evidence="3">Up-regulated following blood feeding.</text>
</comment>
<organism evidence="6">
    <name type="scientific">Ixodes scapularis</name>
    <name type="common">Black-legged tick</name>
    <name type="synonym">Deer tick</name>
    <dbReference type="NCBI Taxonomy" id="6945"/>
    <lineage>
        <taxon>Eukaryota</taxon>
        <taxon>Metazoa</taxon>
        <taxon>Ecdysozoa</taxon>
        <taxon>Arthropoda</taxon>
        <taxon>Chelicerata</taxon>
        <taxon>Arachnida</taxon>
        <taxon>Acari</taxon>
        <taxon>Parasitiformes</taxon>
        <taxon>Ixodida</taxon>
        <taxon>Ixodoidea</taxon>
        <taxon>Ixodidae</taxon>
        <taxon>Ixodinae</taxon>
        <taxon>Ixodes</taxon>
    </lineage>
</organism>
<feature type="signal peptide" evidence="1">
    <location>
        <begin position="1"/>
        <end position="17"/>
    </location>
</feature>
<feature type="chain" id="PRO_5036438716" description="Salivary anticoagulant protein P23" evidence="1">
    <location>
        <begin position="18"/>
        <end position="222"/>
    </location>
</feature>
<feature type="glycosylation site" description="N-linked (GlcNAc...) asparagine" evidence="2">
    <location>
        <position position="56"/>
    </location>
</feature>
<feature type="glycosylation site" description="N-linked (GlcNAc...) asparagine" evidence="2">
    <location>
        <position position="73"/>
    </location>
</feature>
<feature type="glycosylation site" description="N-linked (GlcNAc...) asparagine" evidence="2">
    <location>
        <position position="109"/>
    </location>
</feature>
<feature type="glycosylation site" description="N-linked (GlcNAc...) asparagine" evidence="2">
    <location>
        <position position="114"/>
    </location>
</feature>
<evidence type="ECO:0000255" key="1"/>
<evidence type="ECO:0000255" key="2">
    <source>
        <dbReference type="PROSITE-ProRule" id="PRU00498"/>
    </source>
</evidence>
<evidence type="ECO:0000269" key="3">
    <source>
    </source>
</evidence>
<evidence type="ECO:0000303" key="4">
    <source>
    </source>
</evidence>
<evidence type="ECO:0000305" key="5"/>
<evidence type="ECO:0000312" key="6">
    <source>
        <dbReference type="EMBL" id="AEE89467.1"/>
    </source>
</evidence>
<evidence type="ECO:0000312" key="7">
    <source>
        <dbReference type="EMBL" id="MOY43520.1"/>
    </source>
</evidence>
<keyword id="KW-1203">Blood coagulation cascade inhibiting toxin</keyword>
<keyword id="KW-0325">Glycoprotein</keyword>
<keyword id="KW-1199">Hemostasis impairing toxin</keyword>
<keyword id="KW-1185">Reference proteome</keyword>
<keyword id="KW-0964">Secreted</keyword>
<keyword id="KW-0732">Signal</keyword>
<keyword id="KW-0800">Toxin</keyword>
<reference evidence="6" key="1">
    <citation type="journal article" date="2011" name="PLoS ONE">
        <title>Identification and characterization of Ixodes scapularis antigens that elicit tick immunity using yeast surface display.</title>
        <authorList>
            <person name="Schuijt T.J."/>
            <person name="Narasimhan S."/>
            <person name="Daffre S."/>
            <person name="DePonte K."/>
            <person name="Hovius J.W."/>
            <person name="Van't Veer C."/>
            <person name="van der Poll T."/>
            <person name="Bakhtiari K."/>
            <person name="Meijers J.C."/>
            <person name="Boder E.T."/>
            <person name="van Dam A.P."/>
            <person name="Fikrig E."/>
        </authorList>
    </citation>
    <scope>NUCLEOTIDE SEQUENCE [MRNA]</scope>
    <scope>FUNCTION</scope>
    <scope>TISSUE SPECIFICITY</scope>
    <scope>DEVELOPMENTAL STAGE</scope>
    <scope>INDUCTION BY BLOOD FEEDING</scope>
</reference>
<reference evidence="7" key="2">
    <citation type="submission" date="2019-04" db="EMBL/GenBank/DDBJ databases">
        <title>An insight into the mialome of Ixodes scapularis.</title>
        <authorList>
            <person name="Ribeiro J.M."/>
            <person name="Mather T.N."/>
            <person name="Karim S."/>
        </authorList>
    </citation>
    <scope>NUCLEOTIDE SEQUENCE [LARGE SCALE MRNA]</scope>
</reference>
<sequence length="222" mass="24466">MLTVSLLTLSLAAYASAVATVTDANNFMDAVLHTRIPALITSEPILFPFATIPPFNFTVAGTNILTNRELQVNVSRGEIRGFSTEVKRVGDCMPPVLREGKTSIRCTLNFTGINATFDTHTRGDNIVASDKNIWVRASVIDTTGQFEAVAERGKQGNVHTFLVDKIHVKVKNDKALSLNDKRKKKFRQHFEDKVLTVLPQIFYGAYLHLLGAAVSSVPFPHV</sequence>
<protein>
    <recommendedName>
        <fullName evidence="5">Salivary anticoagulant protein P23</fullName>
        <shortName evidence="4">P23</shortName>
    </recommendedName>
    <alternativeName>
        <fullName evidence="6">Salivary protein antigen P23</fullName>
    </alternativeName>
</protein>
<dbReference type="EMBL" id="HQ605984">
    <property type="protein sequence ID" value="AEE89467.1"/>
    <property type="molecule type" value="mRNA"/>
</dbReference>
<dbReference type="EMBL" id="GHJT01009549">
    <property type="protein sequence ID" value="MOY43520.1"/>
    <property type="molecule type" value="Transcribed_RNA"/>
</dbReference>
<dbReference type="SMR" id="F6KSY2"/>
<dbReference type="VEuPathDB" id="VectorBase:ISCI024012"/>
<dbReference type="VEuPathDB" id="VectorBase:ISCP_028291"/>
<dbReference type="VEuPathDB" id="VectorBase:ISCW024012"/>
<dbReference type="HOGENOM" id="CLU_119228_0_0_1"/>
<dbReference type="OrthoDB" id="6477587at2759"/>
<dbReference type="Proteomes" id="UP000001555">
    <property type="component" value="Unplaced"/>
</dbReference>
<dbReference type="GO" id="GO:0005576">
    <property type="term" value="C:extracellular region"/>
    <property type="evidence" value="ECO:0007669"/>
    <property type="project" value="UniProtKB-SubCell"/>
</dbReference>
<dbReference type="GO" id="GO:0090729">
    <property type="term" value="F:toxin activity"/>
    <property type="evidence" value="ECO:0007669"/>
    <property type="project" value="UniProtKB-KW"/>
</dbReference>
<proteinExistence type="evidence at protein level"/>
<accession>F6KSY2</accession>